<sequence>MVNKRMQTLLMQLRQQGIHDERLLQAIEAVPRERFVDEALAHKAYENTALPIGAGQTISQPYMVARMTELLQLTPTSRVLEIGTGSGYQTAILAHLVDHVCSVERIKGLQWQAKRRLKQLDLHNVSTRHGDGWLGWQSRGPFDAIIVTAAPPEIPDALLEQLDEGGILVLPVGEQFQTLKYVQRRNNEYHIETVEAVRFVPLVKGELA</sequence>
<organism>
    <name type="scientific">Yersinia pestis bv. Antiqua (strain Antiqua)</name>
    <dbReference type="NCBI Taxonomy" id="360102"/>
    <lineage>
        <taxon>Bacteria</taxon>
        <taxon>Pseudomonadati</taxon>
        <taxon>Pseudomonadota</taxon>
        <taxon>Gammaproteobacteria</taxon>
        <taxon>Enterobacterales</taxon>
        <taxon>Yersiniaceae</taxon>
        <taxon>Yersinia</taxon>
    </lineage>
</organism>
<proteinExistence type="inferred from homology"/>
<feature type="chain" id="PRO_1000004832" description="Protein-L-isoaspartate O-methyltransferase">
    <location>
        <begin position="1"/>
        <end position="208"/>
    </location>
</feature>
<feature type="active site" evidence="1">
    <location>
        <position position="59"/>
    </location>
</feature>
<keyword id="KW-0963">Cytoplasm</keyword>
<keyword id="KW-0489">Methyltransferase</keyword>
<keyword id="KW-0949">S-adenosyl-L-methionine</keyword>
<keyword id="KW-0808">Transferase</keyword>
<accession>Q1C474</accession>
<dbReference type="EC" id="2.1.1.77" evidence="1"/>
<dbReference type="EMBL" id="CP000308">
    <property type="protein sequence ID" value="ABG14748.1"/>
    <property type="molecule type" value="Genomic_DNA"/>
</dbReference>
<dbReference type="RefSeq" id="WP_002209395.1">
    <property type="nucleotide sequence ID" value="NZ_CP009906.1"/>
</dbReference>
<dbReference type="SMR" id="Q1C474"/>
<dbReference type="KEGG" id="ypa:YPA_2786"/>
<dbReference type="Proteomes" id="UP000001971">
    <property type="component" value="Chromosome"/>
</dbReference>
<dbReference type="GO" id="GO:0005737">
    <property type="term" value="C:cytoplasm"/>
    <property type="evidence" value="ECO:0007669"/>
    <property type="project" value="UniProtKB-SubCell"/>
</dbReference>
<dbReference type="GO" id="GO:0004719">
    <property type="term" value="F:protein-L-isoaspartate (D-aspartate) O-methyltransferase activity"/>
    <property type="evidence" value="ECO:0007669"/>
    <property type="project" value="UniProtKB-UniRule"/>
</dbReference>
<dbReference type="GO" id="GO:0032259">
    <property type="term" value="P:methylation"/>
    <property type="evidence" value="ECO:0007669"/>
    <property type="project" value="UniProtKB-KW"/>
</dbReference>
<dbReference type="GO" id="GO:0036211">
    <property type="term" value="P:protein modification process"/>
    <property type="evidence" value="ECO:0007669"/>
    <property type="project" value="UniProtKB-UniRule"/>
</dbReference>
<dbReference type="GO" id="GO:0030091">
    <property type="term" value="P:protein repair"/>
    <property type="evidence" value="ECO:0007669"/>
    <property type="project" value="UniProtKB-UniRule"/>
</dbReference>
<dbReference type="CDD" id="cd02440">
    <property type="entry name" value="AdoMet_MTases"/>
    <property type="match status" value="1"/>
</dbReference>
<dbReference type="FunFam" id="3.40.50.150:FF:000010">
    <property type="entry name" value="Protein-L-isoaspartate O-methyltransferase"/>
    <property type="match status" value="1"/>
</dbReference>
<dbReference type="Gene3D" id="3.40.50.150">
    <property type="entry name" value="Vaccinia Virus protein VP39"/>
    <property type="match status" value="1"/>
</dbReference>
<dbReference type="HAMAP" id="MF_00090">
    <property type="entry name" value="PIMT"/>
    <property type="match status" value="1"/>
</dbReference>
<dbReference type="InterPro" id="IPR000682">
    <property type="entry name" value="PCMT"/>
</dbReference>
<dbReference type="InterPro" id="IPR029063">
    <property type="entry name" value="SAM-dependent_MTases_sf"/>
</dbReference>
<dbReference type="NCBIfam" id="TIGR00080">
    <property type="entry name" value="pimt"/>
    <property type="match status" value="1"/>
</dbReference>
<dbReference type="NCBIfam" id="NF001453">
    <property type="entry name" value="PRK00312.1"/>
    <property type="match status" value="1"/>
</dbReference>
<dbReference type="PANTHER" id="PTHR11579">
    <property type="entry name" value="PROTEIN-L-ISOASPARTATE O-METHYLTRANSFERASE"/>
    <property type="match status" value="1"/>
</dbReference>
<dbReference type="PANTHER" id="PTHR11579:SF0">
    <property type="entry name" value="PROTEIN-L-ISOASPARTATE(D-ASPARTATE) O-METHYLTRANSFERASE"/>
    <property type="match status" value="1"/>
</dbReference>
<dbReference type="Pfam" id="PF01135">
    <property type="entry name" value="PCMT"/>
    <property type="match status" value="1"/>
</dbReference>
<dbReference type="SUPFAM" id="SSF53335">
    <property type="entry name" value="S-adenosyl-L-methionine-dependent methyltransferases"/>
    <property type="match status" value="1"/>
</dbReference>
<dbReference type="PROSITE" id="PS01279">
    <property type="entry name" value="PCMT"/>
    <property type="match status" value="1"/>
</dbReference>
<reference key="1">
    <citation type="journal article" date="2006" name="J. Bacteriol.">
        <title>Complete genome sequence of Yersinia pestis strains Antiqua and Nepal516: evidence of gene reduction in an emerging pathogen.</title>
        <authorList>
            <person name="Chain P.S.G."/>
            <person name="Hu P."/>
            <person name="Malfatti S.A."/>
            <person name="Radnedge L."/>
            <person name="Larimer F."/>
            <person name="Vergez L.M."/>
            <person name="Worsham P."/>
            <person name="Chu M.C."/>
            <person name="Andersen G.L."/>
        </authorList>
    </citation>
    <scope>NUCLEOTIDE SEQUENCE [LARGE SCALE GENOMIC DNA]</scope>
    <source>
        <strain>Antiqua</strain>
    </source>
</reference>
<name>PIMT_YERPA</name>
<gene>
    <name evidence="1" type="primary">pcm</name>
    <name type="ordered locus">YPA_2786</name>
</gene>
<comment type="function">
    <text evidence="1">Catalyzes the methyl esterification of L-isoaspartyl residues in peptides and proteins that result from spontaneous decomposition of normal L-aspartyl and L-asparaginyl residues. It plays a role in the repair and/or degradation of damaged proteins.</text>
</comment>
<comment type="catalytic activity">
    <reaction evidence="1">
        <text>[protein]-L-isoaspartate + S-adenosyl-L-methionine = [protein]-L-isoaspartate alpha-methyl ester + S-adenosyl-L-homocysteine</text>
        <dbReference type="Rhea" id="RHEA:12705"/>
        <dbReference type="Rhea" id="RHEA-COMP:12143"/>
        <dbReference type="Rhea" id="RHEA-COMP:12144"/>
        <dbReference type="ChEBI" id="CHEBI:57856"/>
        <dbReference type="ChEBI" id="CHEBI:59789"/>
        <dbReference type="ChEBI" id="CHEBI:90596"/>
        <dbReference type="ChEBI" id="CHEBI:90598"/>
        <dbReference type="EC" id="2.1.1.77"/>
    </reaction>
</comment>
<comment type="subcellular location">
    <subcellularLocation>
        <location evidence="1">Cytoplasm</location>
    </subcellularLocation>
</comment>
<comment type="similarity">
    <text evidence="1">Belongs to the methyltransferase superfamily. L-isoaspartyl/D-aspartyl protein methyltransferase family.</text>
</comment>
<evidence type="ECO:0000255" key="1">
    <source>
        <dbReference type="HAMAP-Rule" id="MF_00090"/>
    </source>
</evidence>
<protein>
    <recommendedName>
        <fullName evidence="1">Protein-L-isoaspartate O-methyltransferase</fullName>
        <ecNumber evidence="1">2.1.1.77</ecNumber>
    </recommendedName>
    <alternativeName>
        <fullName evidence="1">L-isoaspartyl protein carboxyl methyltransferase</fullName>
    </alternativeName>
    <alternativeName>
        <fullName evidence="1">Protein L-isoaspartyl methyltransferase</fullName>
    </alternativeName>
    <alternativeName>
        <fullName evidence="1">Protein-beta-aspartate methyltransferase</fullName>
        <shortName evidence="1">PIMT</shortName>
    </alternativeName>
</protein>